<name>PNP_BUCA5</name>
<comment type="function">
    <text evidence="1">Involved in mRNA degradation. Catalyzes the phosphorolysis of single-stranded polyribonucleotides processively in the 3'- to 5'-direction.</text>
</comment>
<comment type="catalytic activity">
    <reaction evidence="1">
        <text>RNA(n+1) + phosphate = RNA(n) + a ribonucleoside 5'-diphosphate</text>
        <dbReference type="Rhea" id="RHEA:22096"/>
        <dbReference type="Rhea" id="RHEA-COMP:14527"/>
        <dbReference type="Rhea" id="RHEA-COMP:17342"/>
        <dbReference type="ChEBI" id="CHEBI:43474"/>
        <dbReference type="ChEBI" id="CHEBI:57930"/>
        <dbReference type="ChEBI" id="CHEBI:140395"/>
        <dbReference type="EC" id="2.7.7.8"/>
    </reaction>
</comment>
<comment type="cofactor">
    <cofactor evidence="1">
        <name>Mg(2+)</name>
        <dbReference type="ChEBI" id="CHEBI:18420"/>
    </cofactor>
</comment>
<comment type="subunit">
    <text evidence="1">Component of the RNA degradosome, which is a multiprotein complex involved in RNA processing and mRNA degradation.</text>
</comment>
<comment type="subcellular location">
    <subcellularLocation>
        <location evidence="1">Cytoplasm</location>
    </subcellularLocation>
</comment>
<comment type="similarity">
    <text evidence="1">Belongs to the polyribonucleotide nucleotidyltransferase family.</text>
</comment>
<proteinExistence type="inferred from homology"/>
<keyword id="KW-0963">Cytoplasm</keyword>
<keyword id="KW-0460">Magnesium</keyword>
<keyword id="KW-0479">Metal-binding</keyword>
<keyword id="KW-0548">Nucleotidyltransferase</keyword>
<keyword id="KW-0694">RNA-binding</keyword>
<keyword id="KW-0808">Transferase</keyword>
<reference key="1">
    <citation type="journal article" date="2009" name="Science">
        <title>The dynamics and time scale of ongoing genomic erosion in symbiotic bacteria.</title>
        <authorList>
            <person name="Moran N.A."/>
            <person name="McLaughlin H.J."/>
            <person name="Sorek R."/>
        </authorList>
    </citation>
    <scope>NUCLEOTIDE SEQUENCE [LARGE SCALE GENOMIC DNA]</scope>
    <source>
        <strain>5A</strain>
    </source>
</reference>
<sequence length="707" mass="78234">MLNPIVRKFQYGQHTITLETGVIARQANAAVMASMDETAVFVTVVGQKKIHTGQKFFPLTVNYQERTYAAGRIPGGFFRREGRPSENEILTARLIDRPLRPLFPKKFLNEIQIIATVVSVNPQINPDIISIIGASAALSLSGIPFYGPVGAARVGYINNQYILNPISDDMKNSSLDLVVSGTQNAILMVEAESKILSEEKILGAIIFGHQQQQVVINNIRSLSNEASKLPWVISYPETNKTLELKIINSFEKNISDAYVIFNKQDRIEKLNSIKENIIKLFLDENSNIDTLEIEDIFQKIEKKVVRKRILSNQTRIDGREKDMIRALDVRTGILPRTHGSALFTRGETQSLVSVTLGTSRDAQNLDELLGDRIDNFLFHYNFPPYSVGEIGMVGSPKRREIGHGRLAKRSLLAVMPTLENFPYTIRVVSEITESNGSSSMASVCGASLALMDAGVPIKSAVAGISMGLVKEGNQHVLLSDILGDEDHLGDMDFKVAGTEEGITALQMDMKIEGITNEIIHSALNEARLARLHILNVMNQALNESRSEISEFAPRIHIIKINPEKIKDVIGKGGSVIRMLTEETGTIIEIEDDGTVKISSTVKEKAKNAIRRIKEITAEIEVGRIYSGKVTRIVDFGAFVSIGLGKEGLVHISQISDKRVDKVSNHLKIDQIISVKVLEIDRQGRLRLSIKEIDSSILSNKSINNSII</sequence>
<dbReference type="EC" id="2.7.7.8" evidence="1"/>
<dbReference type="EMBL" id="CP001161">
    <property type="protein sequence ID" value="ACL30729.1"/>
    <property type="molecule type" value="Genomic_DNA"/>
</dbReference>
<dbReference type="RefSeq" id="WP_009874331.1">
    <property type="nucleotide sequence ID" value="NC_011833.1"/>
</dbReference>
<dbReference type="SMR" id="B8D9F8"/>
<dbReference type="KEGG" id="bap:BUAP5A_366"/>
<dbReference type="HOGENOM" id="CLU_004217_2_2_6"/>
<dbReference type="OrthoDB" id="9804305at2"/>
<dbReference type="Proteomes" id="UP000006904">
    <property type="component" value="Chromosome"/>
</dbReference>
<dbReference type="GO" id="GO:0005829">
    <property type="term" value="C:cytosol"/>
    <property type="evidence" value="ECO:0007669"/>
    <property type="project" value="TreeGrafter"/>
</dbReference>
<dbReference type="GO" id="GO:0000175">
    <property type="term" value="F:3'-5'-RNA exonuclease activity"/>
    <property type="evidence" value="ECO:0007669"/>
    <property type="project" value="TreeGrafter"/>
</dbReference>
<dbReference type="GO" id="GO:0000287">
    <property type="term" value="F:magnesium ion binding"/>
    <property type="evidence" value="ECO:0007669"/>
    <property type="project" value="UniProtKB-UniRule"/>
</dbReference>
<dbReference type="GO" id="GO:0004654">
    <property type="term" value="F:polyribonucleotide nucleotidyltransferase activity"/>
    <property type="evidence" value="ECO:0007669"/>
    <property type="project" value="UniProtKB-UniRule"/>
</dbReference>
<dbReference type="GO" id="GO:0003723">
    <property type="term" value="F:RNA binding"/>
    <property type="evidence" value="ECO:0007669"/>
    <property type="project" value="UniProtKB-UniRule"/>
</dbReference>
<dbReference type="GO" id="GO:0006402">
    <property type="term" value="P:mRNA catabolic process"/>
    <property type="evidence" value="ECO:0007669"/>
    <property type="project" value="UniProtKB-UniRule"/>
</dbReference>
<dbReference type="GO" id="GO:0006396">
    <property type="term" value="P:RNA processing"/>
    <property type="evidence" value="ECO:0007669"/>
    <property type="project" value="InterPro"/>
</dbReference>
<dbReference type="CDD" id="cd02393">
    <property type="entry name" value="KH-I_PNPase"/>
    <property type="match status" value="1"/>
</dbReference>
<dbReference type="CDD" id="cd11363">
    <property type="entry name" value="RNase_PH_PNPase_1"/>
    <property type="match status" value="1"/>
</dbReference>
<dbReference type="CDD" id="cd11364">
    <property type="entry name" value="RNase_PH_PNPase_2"/>
    <property type="match status" value="1"/>
</dbReference>
<dbReference type="CDD" id="cd04472">
    <property type="entry name" value="S1_PNPase"/>
    <property type="match status" value="1"/>
</dbReference>
<dbReference type="FunFam" id="2.40.50.140:FF:000023">
    <property type="entry name" value="Polyribonucleotide nucleotidyltransferase"/>
    <property type="match status" value="1"/>
</dbReference>
<dbReference type="FunFam" id="3.30.1370.10:FF:000001">
    <property type="entry name" value="Polyribonucleotide nucleotidyltransferase"/>
    <property type="match status" value="1"/>
</dbReference>
<dbReference type="FunFam" id="3.30.230.70:FF:000001">
    <property type="entry name" value="Polyribonucleotide nucleotidyltransferase"/>
    <property type="match status" value="1"/>
</dbReference>
<dbReference type="FunFam" id="3.30.230.70:FF:000002">
    <property type="entry name" value="Polyribonucleotide nucleotidyltransferase"/>
    <property type="match status" value="1"/>
</dbReference>
<dbReference type="Gene3D" id="3.30.230.70">
    <property type="entry name" value="GHMP Kinase, N-terminal domain"/>
    <property type="match status" value="2"/>
</dbReference>
<dbReference type="Gene3D" id="3.30.1370.10">
    <property type="entry name" value="K Homology domain, type 1"/>
    <property type="match status" value="1"/>
</dbReference>
<dbReference type="Gene3D" id="2.40.50.140">
    <property type="entry name" value="Nucleic acid-binding proteins"/>
    <property type="match status" value="1"/>
</dbReference>
<dbReference type="HAMAP" id="MF_01595">
    <property type="entry name" value="PNPase"/>
    <property type="match status" value="1"/>
</dbReference>
<dbReference type="InterPro" id="IPR001247">
    <property type="entry name" value="ExoRNase_PH_dom1"/>
</dbReference>
<dbReference type="InterPro" id="IPR015847">
    <property type="entry name" value="ExoRNase_PH_dom2"/>
</dbReference>
<dbReference type="InterPro" id="IPR036345">
    <property type="entry name" value="ExoRNase_PH_dom2_sf"/>
</dbReference>
<dbReference type="InterPro" id="IPR004087">
    <property type="entry name" value="KH_dom"/>
</dbReference>
<dbReference type="InterPro" id="IPR004088">
    <property type="entry name" value="KH_dom_type_1"/>
</dbReference>
<dbReference type="InterPro" id="IPR036612">
    <property type="entry name" value="KH_dom_type_1_sf"/>
</dbReference>
<dbReference type="InterPro" id="IPR012340">
    <property type="entry name" value="NA-bd_OB-fold"/>
</dbReference>
<dbReference type="InterPro" id="IPR012162">
    <property type="entry name" value="PNPase"/>
</dbReference>
<dbReference type="InterPro" id="IPR027408">
    <property type="entry name" value="PNPase/RNase_PH_dom_sf"/>
</dbReference>
<dbReference type="InterPro" id="IPR015848">
    <property type="entry name" value="PNPase_PH_RNA-bd_bac/org-type"/>
</dbReference>
<dbReference type="InterPro" id="IPR036456">
    <property type="entry name" value="PNPase_PH_RNA-bd_sf"/>
</dbReference>
<dbReference type="InterPro" id="IPR020568">
    <property type="entry name" value="Ribosomal_Su5_D2-typ_SF"/>
</dbReference>
<dbReference type="InterPro" id="IPR003029">
    <property type="entry name" value="S1_domain"/>
</dbReference>
<dbReference type="NCBIfam" id="TIGR03591">
    <property type="entry name" value="polynuc_phos"/>
    <property type="match status" value="1"/>
</dbReference>
<dbReference type="NCBIfam" id="NF008805">
    <property type="entry name" value="PRK11824.1"/>
    <property type="match status" value="1"/>
</dbReference>
<dbReference type="PANTHER" id="PTHR11252">
    <property type="entry name" value="POLYRIBONUCLEOTIDE NUCLEOTIDYLTRANSFERASE"/>
    <property type="match status" value="1"/>
</dbReference>
<dbReference type="PANTHER" id="PTHR11252:SF0">
    <property type="entry name" value="POLYRIBONUCLEOTIDE NUCLEOTIDYLTRANSFERASE 1, MITOCHONDRIAL"/>
    <property type="match status" value="1"/>
</dbReference>
<dbReference type="Pfam" id="PF00013">
    <property type="entry name" value="KH_1"/>
    <property type="match status" value="1"/>
</dbReference>
<dbReference type="Pfam" id="PF03726">
    <property type="entry name" value="PNPase"/>
    <property type="match status" value="1"/>
</dbReference>
<dbReference type="Pfam" id="PF01138">
    <property type="entry name" value="RNase_PH"/>
    <property type="match status" value="2"/>
</dbReference>
<dbReference type="Pfam" id="PF03725">
    <property type="entry name" value="RNase_PH_C"/>
    <property type="match status" value="2"/>
</dbReference>
<dbReference type="Pfam" id="PF00575">
    <property type="entry name" value="S1"/>
    <property type="match status" value="1"/>
</dbReference>
<dbReference type="PIRSF" id="PIRSF005499">
    <property type="entry name" value="PNPase"/>
    <property type="match status" value="1"/>
</dbReference>
<dbReference type="SMART" id="SM00322">
    <property type="entry name" value="KH"/>
    <property type="match status" value="1"/>
</dbReference>
<dbReference type="SMART" id="SM00316">
    <property type="entry name" value="S1"/>
    <property type="match status" value="1"/>
</dbReference>
<dbReference type="SUPFAM" id="SSF54791">
    <property type="entry name" value="Eukaryotic type KH-domain (KH-domain type I)"/>
    <property type="match status" value="1"/>
</dbReference>
<dbReference type="SUPFAM" id="SSF50249">
    <property type="entry name" value="Nucleic acid-binding proteins"/>
    <property type="match status" value="1"/>
</dbReference>
<dbReference type="SUPFAM" id="SSF46915">
    <property type="entry name" value="Polynucleotide phosphorylase/guanosine pentaphosphate synthase (PNPase/GPSI), domain 3"/>
    <property type="match status" value="1"/>
</dbReference>
<dbReference type="SUPFAM" id="SSF55666">
    <property type="entry name" value="Ribonuclease PH domain 2-like"/>
    <property type="match status" value="2"/>
</dbReference>
<dbReference type="SUPFAM" id="SSF54211">
    <property type="entry name" value="Ribosomal protein S5 domain 2-like"/>
    <property type="match status" value="2"/>
</dbReference>
<dbReference type="PROSITE" id="PS50084">
    <property type="entry name" value="KH_TYPE_1"/>
    <property type="match status" value="1"/>
</dbReference>
<dbReference type="PROSITE" id="PS50126">
    <property type="entry name" value="S1"/>
    <property type="match status" value="1"/>
</dbReference>
<organism>
    <name type="scientific">Buchnera aphidicola subsp. Acyrthosiphon pisum (strain 5A)</name>
    <dbReference type="NCBI Taxonomy" id="563178"/>
    <lineage>
        <taxon>Bacteria</taxon>
        <taxon>Pseudomonadati</taxon>
        <taxon>Pseudomonadota</taxon>
        <taxon>Gammaproteobacteria</taxon>
        <taxon>Enterobacterales</taxon>
        <taxon>Erwiniaceae</taxon>
        <taxon>Buchnera</taxon>
    </lineage>
</organism>
<evidence type="ECO:0000255" key="1">
    <source>
        <dbReference type="HAMAP-Rule" id="MF_01595"/>
    </source>
</evidence>
<accession>B8D9F8</accession>
<gene>
    <name evidence="1" type="primary">pnp</name>
    <name type="ordered locus">BUAP5A_366</name>
</gene>
<protein>
    <recommendedName>
        <fullName evidence="1">Polyribonucleotide nucleotidyltransferase</fullName>
        <ecNumber evidence="1">2.7.7.8</ecNumber>
    </recommendedName>
    <alternativeName>
        <fullName evidence="1">Polynucleotide phosphorylase</fullName>
        <shortName evidence="1">PNPase</shortName>
    </alternativeName>
</protein>
<feature type="chain" id="PRO_1000185726" description="Polyribonucleotide nucleotidyltransferase">
    <location>
        <begin position="1"/>
        <end position="707"/>
    </location>
</feature>
<feature type="domain" description="KH" evidence="1">
    <location>
        <begin position="553"/>
        <end position="612"/>
    </location>
</feature>
<feature type="domain" description="S1 motif" evidence="1">
    <location>
        <begin position="622"/>
        <end position="690"/>
    </location>
</feature>
<feature type="binding site" evidence="1">
    <location>
        <position position="486"/>
    </location>
    <ligand>
        <name>Mg(2+)</name>
        <dbReference type="ChEBI" id="CHEBI:18420"/>
    </ligand>
</feature>
<feature type="binding site" evidence="1">
    <location>
        <position position="492"/>
    </location>
    <ligand>
        <name>Mg(2+)</name>
        <dbReference type="ChEBI" id="CHEBI:18420"/>
    </ligand>
</feature>